<proteinExistence type="inferred from homology"/>
<sequence length="190" mass="21271">MAKANEIKRGMAVNLNGKLLLVKDIDVQSPSARGASTLYKMRFSDVRTGLKVEERFKGDENLDTITLTRRAVNFSYIDGDEYVFMDDEDYTPYNFKKEQIEDELLFIPEGGMPGMQVLTMEGQLLALELPQTVDMEIVDTAPSIKGASASARNKPAIMSTGLSIQVPEYISPGEKIRIHIAERRYMGRAD</sequence>
<protein>
    <recommendedName>
        <fullName evidence="1">Elongation factor P-like protein</fullName>
    </recommendedName>
</protein>
<gene>
    <name type="ordered locus">YPK_2777</name>
</gene>
<dbReference type="EMBL" id="CP000950">
    <property type="protein sequence ID" value="ACA69054.1"/>
    <property type="molecule type" value="Genomic_DNA"/>
</dbReference>
<dbReference type="SMR" id="B1JS27"/>
<dbReference type="KEGG" id="ypy:YPK_2777"/>
<dbReference type="PATRIC" id="fig|502800.11.peg.3485"/>
<dbReference type="GO" id="GO:0005737">
    <property type="term" value="C:cytoplasm"/>
    <property type="evidence" value="ECO:0007669"/>
    <property type="project" value="InterPro"/>
</dbReference>
<dbReference type="GO" id="GO:0003746">
    <property type="term" value="F:translation elongation factor activity"/>
    <property type="evidence" value="ECO:0007669"/>
    <property type="project" value="UniProtKB-UniRule"/>
</dbReference>
<dbReference type="GO" id="GO:0043043">
    <property type="term" value="P:peptide biosynthetic process"/>
    <property type="evidence" value="ECO:0007669"/>
    <property type="project" value="InterPro"/>
</dbReference>
<dbReference type="CDD" id="cd04470">
    <property type="entry name" value="S1_EF-P_repeat_1"/>
    <property type="match status" value="1"/>
</dbReference>
<dbReference type="CDD" id="cd05794">
    <property type="entry name" value="S1_EF-P_repeat_2"/>
    <property type="match status" value="1"/>
</dbReference>
<dbReference type="FunFam" id="2.40.50.140:FF:000004">
    <property type="entry name" value="Elongation factor P"/>
    <property type="match status" value="1"/>
</dbReference>
<dbReference type="FunFam" id="2.30.30.30:FF:000011">
    <property type="entry name" value="Elongation factor P-like protein"/>
    <property type="match status" value="1"/>
</dbReference>
<dbReference type="FunFam" id="2.40.50.140:FF:000053">
    <property type="entry name" value="Elongation factor P-like protein"/>
    <property type="match status" value="1"/>
</dbReference>
<dbReference type="Gene3D" id="2.30.30.30">
    <property type="match status" value="1"/>
</dbReference>
<dbReference type="Gene3D" id="2.40.50.140">
    <property type="entry name" value="Nucleic acid-binding proteins"/>
    <property type="match status" value="2"/>
</dbReference>
<dbReference type="HAMAP" id="MF_00646">
    <property type="entry name" value="EFP"/>
    <property type="match status" value="1"/>
</dbReference>
<dbReference type="InterPro" id="IPR015365">
    <property type="entry name" value="Elong-fact-P_C"/>
</dbReference>
<dbReference type="InterPro" id="IPR012340">
    <property type="entry name" value="NA-bd_OB-fold"/>
</dbReference>
<dbReference type="InterPro" id="IPR014722">
    <property type="entry name" value="Rib_uL2_dom2"/>
</dbReference>
<dbReference type="InterPro" id="IPR020599">
    <property type="entry name" value="Transl_elong_fac_P/YeiP"/>
</dbReference>
<dbReference type="InterPro" id="IPR013185">
    <property type="entry name" value="Transl_elong_KOW-like"/>
</dbReference>
<dbReference type="InterPro" id="IPR011897">
    <property type="entry name" value="Transl_elong_p-like_YeiP"/>
</dbReference>
<dbReference type="InterPro" id="IPR001059">
    <property type="entry name" value="Transl_elong_P/YeiP_cen"/>
</dbReference>
<dbReference type="InterPro" id="IPR013852">
    <property type="entry name" value="Transl_elong_P/YeiP_CS"/>
</dbReference>
<dbReference type="InterPro" id="IPR008991">
    <property type="entry name" value="Translation_prot_SH3-like_sf"/>
</dbReference>
<dbReference type="NCBIfam" id="NF001810">
    <property type="entry name" value="PRK00529.1"/>
    <property type="match status" value="1"/>
</dbReference>
<dbReference type="NCBIfam" id="NF003392">
    <property type="entry name" value="PRK04542.1"/>
    <property type="match status" value="1"/>
</dbReference>
<dbReference type="NCBIfam" id="TIGR02178">
    <property type="entry name" value="yeiP"/>
    <property type="match status" value="1"/>
</dbReference>
<dbReference type="PANTHER" id="PTHR30053">
    <property type="entry name" value="ELONGATION FACTOR P"/>
    <property type="match status" value="1"/>
</dbReference>
<dbReference type="PANTHER" id="PTHR30053:SF14">
    <property type="entry name" value="TRANSLATION ELONGATION FACTOR KOW-LIKE DOMAIN-CONTAINING PROTEIN"/>
    <property type="match status" value="1"/>
</dbReference>
<dbReference type="Pfam" id="PF01132">
    <property type="entry name" value="EFP"/>
    <property type="match status" value="1"/>
</dbReference>
<dbReference type="Pfam" id="PF08207">
    <property type="entry name" value="EFP_N"/>
    <property type="match status" value="1"/>
</dbReference>
<dbReference type="Pfam" id="PF09285">
    <property type="entry name" value="Elong-fact-P_C"/>
    <property type="match status" value="1"/>
</dbReference>
<dbReference type="PIRSF" id="PIRSF005901">
    <property type="entry name" value="EF-P"/>
    <property type="match status" value="1"/>
</dbReference>
<dbReference type="SMART" id="SM01185">
    <property type="entry name" value="EFP"/>
    <property type="match status" value="1"/>
</dbReference>
<dbReference type="SMART" id="SM00841">
    <property type="entry name" value="Elong-fact-P_C"/>
    <property type="match status" value="1"/>
</dbReference>
<dbReference type="SUPFAM" id="SSF50249">
    <property type="entry name" value="Nucleic acid-binding proteins"/>
    <property type="match status" value="2"/>
</dbReference>
<dbReference type="SUPFAM" id="SSF50104">
    <property type="entry name" value="Translation proteins SH3-like domain"/>
    <property type="match status" value="1"/>
</dbReference>
<dbReference type="PROSITE" id="PS01275">
    <property type="entry name" value="EFP"/>
    <property type="match status" value="1"/>
</dbReference>
<evidence type="ECO:0000255" key="1">
    <source>
        <dbReference type="HAMAP-Rule" id="MF_00646"/>
    </source>
</evidence>
<comment type="similarity">
    <text evidence="1">Belongs to the elongation factor P family.</text>
</comment>
<reference key="1">
    <citation type="submission" date="2008-02" db="EMBL/GenBank/DDBJ databases">
        <title>Complete sequence of Yersinia pseudotuberculosis YPIII.</title>
        <authorList>
            <consortium name="US DOE Joint Genome Institute"/>
            <person name="Copeland A."/>
            <person name="Lucas S."/>
            <person name="Lapidus A."/>
            <person name="Glavina del Rio T."/>
            <person name="Dalin E."/>
            <person name="Tice H."/>
            <person name="Bruce D."/>
            <person name="Goodwin L."/>
            <person name="Pitluck S."/>
            <person name="Munk A.C."/>
            <person name="Brettin T."/>
            <person name="Detter J.C."/>
            <person name="Han C."/>
            <person name="Tapia R."/>
            <person name="Schmutz J."/>
            <person name="Larimer F."/>
            <person name="Land M."/>
            <person name="Hauser L."/>
            <person name="Challacombe J.F."/>
            <person name="Green L."/>
            <person name="Lindler L.E."/>
            <person name="Nikolich M.P."/>
            <person name="Richardson P."/>
        </authorList>
    </citation>
    <scope>NUCLEOTIDE SEQUENCE [LARGE SCALE GENOMIC DNA]</scope>
    <source>
        <strain>YPIII</strain>
    </source>
</reference>
<accession>B1JS27</accession>
<feature type="chain" id="PRO_1000130934" description="Elongation factor P-like protein">
    <location>
        <begin position="1"/>
        <end position="190"/>
    </location>
</feature>
<name>EFPL_YERPY</name>
<organism>
    <name type="scientific">Yersinia pseudotuberculosis serotype O:3 (strain YPIII)</name>
    <dbReference type="NCBI Taxonomy" id="502800"/>
    <lineage>
        <taxon>Bacteria</taxon>
        <taxon>Pseudomonadati</taxon>
        <taxon>Pseudomonadota</taxon>
        <taxon>Gammaproteobacteria</taxon>
        <taxon>Enterobacterales</taxon>
        <taxon>Yersiniaceae</taxon>
        <taxon>Yersinia</taxon>
    </lineage>
</organism>